<gene>
    <name evidence="4" type="ordered locus">lin0367</name>
</gene>
<feature type="chain" id="PRO_0000439495" description="Putative glycerol transporter Lin0367">
    <location>
        <begin position="1"/>
        <end position="113"/>
    </location>
</feature>
<feature type="transmembrane region" description="Helical" evidence="1">
    <location>
        <begin position="3"/>
        <end position="23"/>
    </location>
</feature>
<feature type="transmembrane region" description="Helical" evidence="1">
    <location>
        <begin position="30"/>
        <end position="50"/>
    </location>
</feature>
<feature type="transmembrane region" description="Helical" evidence="1">
    <location>
        <begin position="63"/>
        <end position="83"/>
    </location>
</feature>
<feature type="transmembrane region" description="Helical" evidence="1">
    <location>
        <begin position="92"/>
        <end position="112"/>
    </location>
</feature>
<proteinExistence type="evidence at transcript level"/>
<name>Y367_LISIN</name>
<dbReference type="EMBL" id="AL596164">
    <property type="protein sequence ID" value="CAC95600.1"/>
    <property type="molecule type" value="Genomic_DNA"/>
</dbReference>
<dbReference type="PIR" id="AH1478">
    <property type="entry name" value="AH1478"/>
</dbReference>
<dbReference type="RefSeq" id="WP_003729093.1">
    <property type="nucleotide sequence ID" value="NC_003212.1"/>
</dbReference>
<dbReference type="STRING" id="272626.gene:17564694"/>
<dbReference type="KEGG" id="lin:lin0367"/>
<dbReference type="eggNOG" id="ENOG5032T9Q">
    <property type="taxonomic scope" value="Bacteria"/>
</dbReference>
<dbReference type="HOGENOM" id="CLU_149873_0_0_9"/>
<dbReference type="OrthoDB" id="1028168at2"/>
<dbReference type="Proteomes" id="UP000002513">
    <property type="component" value="Chromosome"/>
</dbReference>
<dbReference type="GO" id="GO:0016020">
    <property type="term" value="C:membrane"/>
    <property type="evidence" value="ECO:0007669"/>
    <property type="project" value="UniProtKB-SubCell"/>
</dbReference>
<dbReference type="GO" id="GO:0006071">
    <property type="term" value="P:glycerol metabolic process"/>
    <property type="evidence" value="ECO:0007669"/>
    <property type="project" value="UniProtKB-KW"/>
</dbReference>
<dbReference type="InterPro" id="IPR054200">
    <property type="entry name" value="DUF6905"/>
</dbReference>
<dbReference type="Pfam" id="PF21846">
    <property type="entry name" value="DUF6905"/>
    <property type="match status" value="1"/>
</dbReference>
<evidence type="ECO:0000255" key="1"/>
<evidence type="ECO:0000269" key="2">
    <source>
    </source>
</evidence>
<evidence type="ECO:0000305" key="3">
    <source>
    </source>
</evidence>
<evidence type="ECO:0000312" key="4">
    <source>
        <dbReference type="EMBL" id="CAC95600.1"/>
    </source>
</evidence>
<accession>Q92EU1</accession>
<reference key="1">
    <citation type="journal article" date="2001" name="Science">
        <title>Comparative genomics of Listeria species.</title>
        <authorList>
            <person name="Glaser P."/>
            <person name="Frangeul L."/>
            <person name="Buchrieser C."/>
            <person name="Rusniok C."/>
            <person name="Amend A."/>
            <person name="Baquero F."/>
            <person name="Berche P."/>
            <person name="Bloecker H."/>
            <person name="Brandt P."/>
            <person name="Chakraborty T."/>
            <person name="Charbit A."/>
            <person name="Chetouani F."/>
            <person name="Couve E."/>
            <person name="de Daruvar A."/>
            <person name="Dehoux P."/>
            <person name="Domann E."/>
            <person name="Dominguez-Bernal G."/>
            <person name="Duchaud E."/>
            <person name="Durant L."/>
            <person name="Dussurget O."/>
            <person name="Entian K.-D."/>
            <person name="Fsihi H."/>
            <person name="Garcia-del Portillo F."/>
            <person name="Garrido P."/>
            <person name="Gautier L."/>
            <person name="Goebel W."/>
            <person name="Gomez-Lopez N."/>
            <person name="Hain T."/>
            <person name="Hauf J."/>
            <person name="Jackson D."/>
            <person name="Jones L.-M."/>
            <person name="Kaerst U."/>
            <person name="Kreft J."/>
            <person name="Kuhn M."/>
            <person name="Kunst F."/>
            <person name="Kurapkat G."/>
            <person name="Madueno E."/>
            <person name="Maitournam A."/>
            <person name="Mata Vicente J."/>
            <person name="Ng E."/>
            <person name="Nedjari H."/>
            <person name="Nordsiek G."/>
            <person name="Novella S."/>
            <person name="de Pablos B."/>
            <person name="Perez-Diaz J.-C."/>
            <person name="Purcell R."/>
            <person name="Remmel B."/>
            <person name="Rose M."/>
            <person name="Schlueter T."/>
            <person name="Simoes N."/>
            <person name="Tierrez A."/>
            <person name="Vazquez-Boland J.-A."/>
            <person name="Voss H."/>
            <person name="Wehland J."/>
            <person name="Cossart P."/>
        </authorList>
    </citation>
    <scope>NUCLEOTIDE SEQUENCE [LARGE SCALE GENOMIC DNA]</scope>
    <source>
        <strain>ATCC BAA-680 / CLIP 11262</strain>
    </source>
</reference>
<reference key="2">
    <citation type="journal article" date="2012" name="J. Bacteriol.">
        <title>Novel listerial glycerol dehydrogenase- and phosphoenolpyruvate-dependent dihydroxyacetone kinase system connected to the pentose phosphate pathway.</title>
        <authorList>
            <person name="Monniot C."/>
            <person name="Zebre A.C."/>
            <person name="Ake F.M."/>
            <person name="Deutscher J."/>
            <person name="Milohanic E."/>
        </authorList>
    </citation>
    <scope>FUNCTION</scope>
    <scope>INDUCTION</scope>
    <source>
        <strain>ATCC BAA-680 / CLIP 11262</strain>
    </source>
</reference>
<protein>
    <recommendedName>
        <fullName evidence="3">Putative glycerol transporter Lin0367</fullName>
    </recommendedName>
</protein>
<comment type="function">
    <text evidence="3">Could be involved in the glycerol uptake either via facilitated diffusion or active transport.</text>
</comment>
<comment type="subcellular location">
    <subcellularLocation>
        <location evidence="1">Membrane</location>
        <topology evidence="1">Multi-pass membrane protein</topology>
    </subcellularLocation>
</comment>
<comment type="induction">
    <text evidence="2">Repressed by GolR.</text>
</comment>
<keyword id="KW-0319">Glycerol metabolism</keyword>
<keyword id="KW-0472">Membrane</keyword>
<keyword id="KW-0812">Transmembrane</keyword>
<keyword id="KW-1133">Transmembrane helix</keyword>
<keyword id="KW-0813">Transport</keyword>
<sequence length="113" mass="11686">MSIGIALATIAGGFLFPFAIRMMWGKMVDEWGAIGGWMAAAFIVGTVWTINHGIPKSMIYQSGTVWVDMAVAAGIGVFTASLLTGGKFSKSVVNLAAAVVGGVLGGFLLSLFL</sequence>
<organism>
    <name type="scientific">Listeria innocua serovar 6a (strain ATCC BAA-680 / CLIP 11262)</name>
    <dbReference type="NCBI Taxonomy" id="272626"/>
    <lineage>
        <taxon>Bacteria</taxon>
        <taxon>Bacillati</taxon>
        <taxon>Bacillota</taxon>
        <taxon>Bacilli</taxon>
        <taxon>Bacillales</taxon>
        <taxon>Listeriaceae</taxon>
        <taxon>Listeria</taxon>
    </lineage>
</organism>